<sequence>MLRHKTKRGHASLDCLKVFDGIPPPYDKKKRMVVPAALKVVRLKPTRKFALLGRQAQEVRWKYQAVTATLEEKRKEKAKIHYWKKKQLMRLRKQAEKNVKKN</sequence>
<comment type="similarity">
    <text evidence="1">Belongs to the universal ribosomal protein uL13 family.</text>
</comment>
<comment type="caution">
    <text evidence="1">Could be the product of a pseudogene. Highly similar to the C-terminus of RPL13A but lacks the N-terminal part.</text>
</comment>
<gene>
    <name type="primary">RPL13AP3</name>
</gene>
<name>R13P3_HUMAN</name>
<evidence type="ECO:0000305" key="1"/>
<accession>Q6NVV1</accession>
<reference key="1">
    <citation type="journal article" date="2004" name="Genome Res.">
        <title>The status, quality, and expansion of the NIH full-length cDNA project: the Mammalian Gene Collection (MGC).</title>
        <authorList>
            <consortium name="The MGC Project Team"/>
        </authorList>
    </citation>
    <scope>NUCLEOTIDE SEQUENCE [LARGE SCALE MRNA]</scope>
    <source>
        <tissue>Testis</tissue>
    </source>
</reference>
<proteinExistence type="uncertain"/>
<feature type="chain" id="PRO_0000334672" description="Putative ribosomal protein uL13-like">
    <location>
        <begin position="1"/>
        <end position="102"/>
    </location>
</feature>
<protein>
    <recommendedName>
        <fullName evidence="1">Putative ribosomal protein uL13-like</fullName>
    </recommendedName>
    <alternativeName>
        <fullName>60S ribosomal protein L13a pseudogene 3</fullName>
    </alternativeName>
    <alternativeName>
        <fullName>Putative 60S ribosomal protein L13a protein RPL13AP3</fullName>
    </alternativeName>
</protein>
<dbReference type="EMBL" id="BC067891">
    <property type="status" value="NOT_ANNOTATED_CDS"/>
    <property type="molecule type" value="mRNA"/>
</dbReference>
<dbReference type="SMR" id="Q6NVV1"/>
<dbReference type="FunCoup" id="Q6NVV1">
    <property type="interactions" value="39"/>
</dbReference>
<dbReference type="IntAct" id="Q6NVV1">
    <property type="interactions" value="4"/>
</dbReference>
<dbReference type="MINT" id="Q6NVV1"/>
<dbReference type="GlyGen" id="Q6NVV1">
    <property type="glycosylation" value="1 site"/>
</dbReference>
<dbReference type="MetOSite" id="Q6NVV1"/>
<dbReference type="SwissPalm" id="Q6NVV1"/>
<dbReference type="BioMuta" id="HGNC:23539"/>
<dbReference type="jPOST" id="Q6NVV1"/>
<dbReference type="MassIVE" id="Q6NVV1"/>
<dbReference type="PeptideAtlas" id="Q6NVV1"/>
<dbReference type="AGR" id="HGNC:23539"/>
<dbReference type="GeneCards" id="RPL13AP3"/>
<dbReference type="HGNC" id="HGNC:23539">
    <property type="gene designation" value="RPL13AP3"/>
</dbReference>
<dbReference type="neXtProt" id="NX_Q6NVV1"/>
<dbReference type="InParanoid" id="Q6NVV1"/>
<dbReference type="PAN-GO" id="Q6NVV1">
    <property type="GO annotations" value="0 GO annotations based on evolutionary models"/>
</dbReference>
<dbReference type="PhylomeDB" id="Q6NVV1"/>
<dbReference type="PathwayCommons" id="Q6NVV1"/>
<dbReference type="SignaLink" id="Q6NVV1"/>
<dbReference type="ChiTaRS" id="RPL13AP3">
    <property type="organism name" value="human"/>
</dbReference>
<dbReference type="Pharos" id="Q6NVV1">
    <property type="development level" value="Tdark"/>
</dbReference>
<dbReference type="Proteomes" id="UP000005640">
    <property type="component" value="Unplaced"/>
</dbReference>
<dbReference type="RNAct" id="Q6NVV1">
    <property type="molecule type" value="protein"/>
</dbReference>
<dbReference type="GO" id="GO:0005634">
    <property type="term" value="C:nucleus"/>
    <property type="evidence" value="ECO:0007005"/>
    <property type="project" value="UniProtKB"/>
</dbReference>
<dbReference type="GO" id="GO:1990904">
    <property type="term" value="C:ribonucleoprotein complex"/>
    <property type="evidence" value="ECO:0007669"/>
    <property type="project" value="UniProtKB-KW"/>
</dbReference>
<dbReference type="GO" id="GO:0005840">
    <property type="term" value="C:ribosome"/>
    <property type="evidence" value="ECO:0007669"/>
    <property type="project" value="UniProtKB-KW"/>
</dbReference>
<dbReference type="GO" id="GO:0003735">
    <property type="term" value="F:structural constituent of ribosome"/>
    <property type="evidence" value="ECO:0007669"/>
    <property type="project" value="InterPro"/>
</dbReference>
<dbReference type="GO" id="GO:0006412">
    <property type="term" value="P:translation"/>
    <property type="evidence" value="ECO:0007669"/>
    <property type="project" value="InterPro"/>
</dbReference>
<dbReference type="FunFam" id="6.10.250.3250:FF:000001">
    <property type="entry name" value="60S ribosomal protein L13a"/>
    <property type="match status" value="1"/>
</dbReference>
<dbReference type="FunFam" id="3.90.1180.10:FF:000015">
    <property type="entry name" value="60S ribosomal protein L13a isoform X2"/>
    <property type="match status" value="1"/>
</dbReference>
<dbReference type="Gene3D" id="6.10.250.3250">
    <property type="match status" value="1"/>
</dbReference>
<dbReference type="Gene3D" id="3.90.1180.10">
    <property type="entry name" value="Ribosomal protein L13"/>
    <property type="match status" value="1"/>
</dbReference>
<dbReference type="InterPro" id="IPR005822">
    <property type="entry name" value="Ribosomal_uL13"/>
</dbReference>
<dbReference type="InterPro" id="IPR036899">
    <property type="entry name" value="Ribosomal_uL13_sf"/>
</dbReference>
<dbReference type="PANTHER" id="PTHR11545:SF30">
    <property type="entry name" value="LARGE RIBOSOMAL SUBUNIT PROTEIN UL13"/>
    <property type="match status" value="1"/>
</dbReference>
<dbReference type="PANTHER" id="PTHR11545">
    <property type="entry name" value="RIBOSOMAL PROTEIN L13"/>
    <property type="match status" value="1"/>
</dbReference>
<dbReference type="SUPFAM" id="SSF52161">
    <property type="entry name" value="Ribosomal protein L13"/>
    <property type="match status" value="1"/>
</dbReference>
<keyword id="KW-1185">Reference proteome</keyword>
<keyword id="KW-0687">Ribonucleoprotein</keyword>
<keyword id="KW-0689">Ribosomal protein</keyword>
<organism>
    <name type="scientific">Homo sapiens</name>
    <name type="common">Human</name>
    <dbReference type="NCBI Taxonomy" id="9606"/>
    <lineage>
        <taxon>Eukaryota</taxon>
        <taxon>Metazoa</taxon>
        <taxon>Chordata</taxon>
        <taxon>Craniata</taxon>
        <taxon>Vertebrata</taxon>
        <taxon>Euteleostomi</taxon>
        <taxon>Mammalia</taxon>
        <taxon>Eutheria</taxon>
        <taxon>Euarchontoglires</taxon>
        <taxon>Primates</taxon>
        <taxon>Haplorrhini</taxon>
        <taxon>Catarrhini</taxon>
        <taxon>Hominidae</taxon>
        <taxon>Homo</taxon>
    </lineage>
</organism>